<proteinExistence type="inferred from homology"/>
<dbReference type="EMBL" id="CP000096">
    <property type="protein sequence ID" value="ABB23069.1"/>
    <property type="molecule type" value="Genomic_DNA"/>
</dbReference>
<dbReference type="RefSeq" id="WP_011356945.1">
    <property type="nucleotide sequence ID" value="NC_007512.1"/>
</dbReference>
<dbReference type="SMR" id="Q3B6G2"/>
<dbReference type="STRING" id="319225.Plut_0179"/>
<dbReference type="KEGG" id="plt:Plut_0179"/>
<dbReference type="eggNOG" id="COG0051">
    <property type="taxonomic scope" value="Bacteria"/>
</dbReference>
<dbReference type="HOGENOM" id="CLU_122625_1_3_10"/>
<dbReference type="OrthoDB" id="9804464at2"/>
<dbReference type="Proteomes" id="UP000002709">
    <property type="component" value="Chromosome"/>
</dbReference>
<dbReference type="GO" id="GO:1990904">
    <property type="term" value="C:ribonucleoprotein complex"/>
    <property type="evidence" value="ECO:0007669"/>
    <property type="project" value="UniProtKB-KW"/>
</dbReference>
<dbReference type="GO" id="GO:0005840">
    <property type="term" value="C:ribosome"/>
    <property type="evidence" value="ECO:0007669"/>
    <property type="project" value="UniProtKB-KW"/>
</dbReference>
<dbReference type="GO" id="GO:0003735">
    <property type="term" value="F:structural constituent of ribosome"/>
    <property type="evidence" value="ECO:0007669"/>
    <property type="project" value="InterPro"/>
</dbReference>
<dbReference type="GO" id="GO:0000049">
    <property type="term" value="F:tRNA binding"/>
    <property type="evidence" value="ECO:0007669"/>
    <property type="project" value="UniProtKB-UniRule"/>
</dbReference>
<dbReference type="GO" id="GO:0006412">
    <property type="term" value="P:translation"/>
    <property type="evidence" value="ECO:0007669"/>
    <property type="project" value="UniProtKB-UniRule"/>
</dbReference>
<dbReference type="FunFam" id="3.30.70.600:FF:000003">
    <property type="entry name" value="30S ribosomal protein S10"/>
    <property type="match status" value="1"/>
</dbReference>
<dbReference type="Gene3D" id="3.30.70.600">
    <property type="entry name" value="Ribosomal protein S10 domain"/>
    <property type="match status" value="1"/>
</dbReference>
<dbReference type="HAMAP" id="MF_00508">
    <property type="entry name" value="Ribosomal_uS10"/>
    <property type="match status" value="1"/>
</dbReference>
<dbReference type="InterPro" id="IPR001848">
    <property type="entry name" value="Ribosomal_uS10"/>
</dbReference>
<dbReference type="InterPro" id="IPR018268">
    <property type="entry name" value="Ribosomal_uS10_CS"/>
</dbReference>
<dbReference type="InterPro" id="IPR027486">
    <property type="entry name" value="Ribosomal_uS10_dom"/>
</dbReference>
<dbReference type="InterPro" id="IPR036838">
    <property type="entry name" value="Ribosomal_uS10_dom_sf"/>
</dbReference>
<dbReference type="NCBIfam" id="NF001861">
    <property type="entry name" value="PRK00596.1"/>
    <property type="match status" value="1"/>
</dbReference>
<dbReference type="NCBIfam" id="TIGR01049">
    <property type="entry name" value="rpsJ_bact"/>
    <property type="match status" value="1"/>
</dbReference>
<dbReference type="PANTHER" id="PTHR11700">
    <property type="entry name" value="30S RIBOSOMAL PROTEIN S10 FAMILY MEMBER"/>
    <property type="match status" value="1"/>
</dbReference>
<dbReference type="Pfam" id="PF00338">
    <property type="entry name" value="Ribosomal_S10"/>
    <property type="match status" value="1"/>
</dbReference>
<dbReference type="PRINTS" id="PR00971">
    <property type="entry name" value="RIBOSOMALS10"/>
</dbReference>
<dbReference type="SMART" id="SM01403">
    <property type="entry name" value="Ribosomal_S10"/>
    <property type="match status" value="1"/>
</dbReference>
<dbReference type="SUPFAM" id="SSF54999">
    <property type="entry name" value="Ribosomal protein S10"/>
    <property type="match status" value="1"/>
</dbReference>
<dbReference type="PROSITE" id="PS00361">
    <property type="entry name" value="RIBOSOMAL_S10"/>
    <property type="match status" value="1"/>
</dbReference>
<comment type="function">
    <text evidence="1">Involved in the binding of tRNA to the ribosomes.</text>
</comment>
<comment type="subunit">
    <text evidence="1">Part of the 30S ribosomal subunit.</text>
</comment>
<comment type="similarity">
    <text evidence="1">Belongs to the universal ribosomal protein uS10 family.</text>
</comment>
<feature type="chain" id="PRO_0000237076" description="Small ribosomal subunit protein uS10">
    <location>
        <begin position="1"/>
        <end position="103"/>
    </location>
</feature>
<name>RS10_CHLL3</name>
<keyword id="KW-1185">Reference proteome</keyword>
<keyword id="KW-0687">Ribonucleoprotein</keyword>
<keyword id="KW-0689">Ribosomal protein</keyword>
<evidence type="ECO:0000255" key="1">
    <source>
        <dbReference type="HAMAP-Rule" id="MF_00508"/>
    </source>
</evidence>
<evidence type="ECO:0000305" key="2"/>
<reference key="1">
    <citation type="submission" date="2005-08" db="EMBL/GenBank/DDBJ databases">
        <title>Complete sequence of Pelodictyon luteolum DSM 273.</title>
        <authorList>
            <consortium name="US DOE Joint Genome Institute"/>
            <person name="Copeland A."/>
            <person name="Lucas S."/>
            <person name="Lapidus A."/>
            <person name="Barry K."/>
            <person name="Detter J.C."/>
            <person name="Glavina T."/>
            <person name="Hammon N."/>
            <person name="Israni S."/>
            <person name="Pitluck S."/>
            <person name="Bryant D."/>
            <person name="Schmutz J."/>
            <person name="Larimer F."/>
            <person name="Land M."/>
            <person name="Kyrpides N."/>
            <person name="Ivanova N."/>
            <person name="Richardson P."/>
        </authorList>
    </citation>
    <scope>NUCLEOTIDE SEQUENCE [LARGE SCALE GENOMIC DNA]</scope>
    <source>
        <strain>DSM 273 / BCRC 81028 / 2530</strain>
    </source>
</reference>
<organism>
    <name type="scientific">Chlorobium luteolum (strain DSM 273 / BCRC 81028 / 2530)</name>
    <name type="common">Pelodictyon luteolum</name>
    <dbReference type="NCBI Taxonomy" id="319225"/>
    <lineage>
        <taxon>Bacteria</taxon>
        <taxon>Pseudomonadati</taxon>
        <taxon>Chlorobiota</taxon>
        <taxon>Chlorobiia</taxon>
        <taxon>Chlorobiales</taxon>
        <taxon>Chlorobiaceae</taxon>
        <taxon>Chlorobium/Pelodictyon group</taxon>
        <taxon>Pelodictyon</taxon>
    </lineage>
</organism>
<gene>
    <name evidence="1" type="primary">rpsJ</name>
    <name type="ordered locus">Plut_0179</name>
</gene>
<sequence>MAVQQKIRIKLKSYDHSLVDKWALRIIDVVKQTDAIIFGPIPLPTKSHVYTVNRSPHVDKKSREQFSFASHKRLIEIINPTSRTIDMLMKLELPSGVDVEIKS</sequence>
<accession>Q3B6G2</accession>
<protein>
    <recommendedName>
        <fullName evidence="1">Small ribosomal subunit protein uS10</fullName>
    </recommendedName>
    <alternativeName>
        <fullName evidence="2">30S ribosomal protein S10</fullName>
    </alternativeName>
</protein>